<protein>
    <recommendedName>
        <fullName evidence="1">Small ribosomal subunit protein uS15</fullName>
    </recommendedName>
    <alternativeName>
        <fullName evidence="2">30S ribosomal protein S15</fullName>
    </alternativeName>
</protein>
<sequence>MSITVEEKARLIKEYATKEGDTGSPEVQVAVLSSRIATLTEHFKAHKKDNHSRRGLLMMVAQRRKLLDYLKKKDEGRYTALIARLGLRR</sequence>
<organism>
    <name type="scientific">Cereibacter sphaeroides (strain ATCC 17023 / DSM 158 / JCM 6121 / CCUG 31486 / LMG 2827 / NBRC 12203 / NCIMB 8253 / ATH 2.4.1.)</name>
    <name type="common">Rhodobacter sphaeroides</name>
    <dbReference type="NCBI Taxonomy" id="272943"/>
    <lineage>
        <taxon>Bacteria</taxon>
        <taxon>Pseudomonadati</taxon>
        <taxon>Pseudomonadota</taxon>
        <taxon>Alphaproteobacteria</taxon>
        <taxon>Rhodobacterales</taxon>
        <taxon>Paracoccaceae</taxon>
        <taxon>Cereibacter</taxon>
    </lineage>
</organism>
<proteinExistence type="inferred from homology"/>
<gene>
    <name evidence="1" type="primary">rpsO</name>
    <name type="ordered locus">RHOS4_27280</name>
    <name type="ORF">RSP_1111</name>
</gene>
<evidence type="ECO:0000255" key="1">
    <source>
        <dbReference type="HAMAP-Rule" id="MF_01343"/>
    </source>
</evidence>
<evidence type="ECO:0000305" key="2"/>
<reference key="1">
    <citation type="submission" date="2005-09" db="EMBL/GenBank/DDBJ databases">
        <title>Complete sequence of chromosome 1 of Rhodobacter sphaeroides 2.4.1.</title>
        <authorList>
            <person name="Copeland A."/>
            <person name="Lucas S."/>
            <person name="Lapidus A."/>
            <person name="Barry K."/>
            <person name="Detter J.C."/>
            <person name="Glavina T."/>
            <person name="Hammon N."/>
            <person name="Israni S."/>
            <person name="Pitluck S."/>
            <person name="Richardson P."/>
            <person name="Mackenzie C."/>
            <person name="Choudhary M."/>
            <person name="Larimer F."/>
            <person name="Hauser L.J."/>
            <person name="Land M."/>
            <person name="Donohue T.J."/>
            <person name="Kaplan S."/>
        </authorList>
    </citation>
    <scope>NUCLEOTIDE SEQUENCE [LARGE SCALE GENOMIC DNA]</scope>
    <source>
        <strain>ATCC 17023 / DSM 158 / JCM 6121 / CCUG 31486 / LMG 2827 / NBRC 12203 / NCIMB 8253 / ATH 2.4.1.</strain>
    </source>
</reference>
<keyword id="KW-1185">Reference proteome</keyword>
<keyword id="KW-0687">Ribonucleoprotein</keyword>
<keyword id="KW-0689">Ribosomal protein</keyword>
<keyword id="KW-0694">RNA-binding</keyword>
<keyword id="KW-0699">rRNA-binding</keyword>
<feature type="chain" id="PRO_0000115522" description="Small ribosomal subunit protein uS15">
    <location>
        <begin position="1"/>
        <end position="89"/>
    </location>
</feature>
<dbReference type="EMBL" id="CP000143">
    <property type="protein sequence ID" value="ABA80296.1"/>
    <property type="molecule type" value="Genomic_DNA"/>
</dbReference>
<dbReference type="RefSeq" id="WP_002721510.1">
    <property type="nucleotide sequence ID" value="NZ_CP030271.1"/>
</dbReference>
<dbReference type="RefSeq" id="YP_354197.1">
    <property type="nucleotide sequence ID" value="NC_007493.2"/>
</dbReference>
<dbReference type="SMR" id="Q3IYT8"/>
<dbReference type="STRING" id="272943.RSP_1111"/>
<dbReference type="EnsemblBacteria" id="ABA80296">
    <property type="protein sequence ID" value="ABA80296"/>
    <property type="gene ID" value="RSP_1111"/>
</dbReference>
<dbReference type="GeneID" id="67447886"/>
<dbReference type="KEGG" id="rsp:RSP_1111"/>
<dbReference type="PATRIC" id="fig|272943.9.peg.3089"/>
<dbReference type="eggNOG" id="COG0184">
    <property type="taxonomic scope" value="Bacteria"/>
</dbReference>
<dbReference type="OrthoDB" id="9799262at2"/>
<dbReference type="PhylomeDB" id="Q3IYT8"/>
<dbReference type="Proteomes" id="UP000002703">
    <property type="component" value="Chromosome 1"/>
</dbReference>
<dbReference type="GO" id="GO:0022627">
    <property type="term" value="C:cytosolic small ribosomal subunit"/>
    <property type="evidence" value="ECO:0007669"/>
    <property type="project" value="TreeGrafter"/>
</dbReference>
<dbReference type="GO" id="GO:0019843">
    <property type="term" value="F:rRNA binding"/>
    <property type="evidence" value="ECO:0007669"/>
    <property type="project" value="UniProtKB-UniRule"/>
</dbReference>
<dbReference type="GO" id="GO:0003735">
    <property type="term" value="F:structural constituent of ribosome"/>
    <property type="evidence" value="ECO:0007669"/>
    <property type="project" value="InterPro"/>
</dbReference>
<dbReference type="GO" id="GO:0006412">
    <property type="term" value="P:translation"/>
    <property type="evidence" value="ECO:0007669"/>
    <property type="project" value="UniProtKB-UniRule"/>
</dbReference>
<dbReference type="CDD" id="cd00353">
    <property type="entry name" value="Ribosomal_S15p_S13e"/>
    <property type="match status" value="1"/>
</dbReference>
<dbReference type="FunFam" id="1.10.287.10:FF:000002">
    <property type="entry name" value="30S ribosomal protein S15"/>
    <property type="match status" value="1"/>
</dbReference>
<dbReference type="Gene3D" id="6.10.250.3130">
    <property type="match status" value="1"/>
</dbReference>
<dbReference type="Gene3D" id="1.10.287.10">
    <property type="entry name" value="S15/NS1, RNA-binding"/>
    <property type="match status" value="1"/>
</dbReference>
<dbReference type="HAMAP" id="MF_01343_B">
    <property type="entry name" value="Ribosomal_uS15_B"/>
    <property type="match status" value="1"/>
</dbReference>
<dbReference type="InterPro" id="IPR000589">
    <property type="entry name" value="Ribosomal_uS15"/>
</dbReference>
<dbReference type="InterPro" id="IPR005290">
    <property type="entry name" value="Ribosomal_uS15_bac-type"/>
</dbReference>
<dbReference type="InterPro" id="IPR009068">
    <property type="entry name" value="uS15_NS1_RNA-bd_sf"/>
</dbReference>
<dbReference type="NCBIfam" id="TIGR00952">
    <property type="entry name" value="S15_bact"/>
    <property type="match status" value="1"/>
</dbReference>
<dbReference type="PANTHER" id="PTHR23321">
    <property type="entry name" value="RIBOSOMAL PROTEIN S15, BACTERIAL AND ORGANELLAR"/>
    <property type="match status" value="1"/>
</dbReference>
<dbReference type="PANTHER" id="PTHR23321:SF26">
    <property type="entry name" value="SMALL RIBOSOMAL SUBUNIT PROTEIN US15M"/>
    <property type="match status" value="1"/>
</dbReference>
<dbReference type="Pfam" id="PF00312">
    <property type="entry name" value="Ribosomal_S15"/>
    <property type="match status" value="1"/>
</dbReference>
<dbReference type="SMART" id="SM01387">
    <property type="entry name" value="Ribosomal_S15"/>
    <property type="match status" value="1"/>
</dbReference>
<dbReference type="SUPFAM" id="SSF47060">
    <property type="entry name" value="S15/NS1 RNA-binding domain"/>
    <property type="match status" value="1"/>
</dbReference>
<dbReference type="PROSITE" id="PS00362">
    <property type="entry name" value="RIBOSOMAL_S15"/>
    <property type="match status" value="1"/>
</dbReference>
<name>RS15_CERS4</name>
<accession>Q3IYT8</accession>
<comment type="function">
    <text evidence="1">One of the primary rRNA binding proteins, it binds directly to 16S rRNA where it helps nucleate assembly of the platform of the 30S subunit by binding and bridging several RNA helices of the 16S rRNA.</text>
</comment>
<comment type="function">
    <text evidence="1">Forms an intersubunit bridge (bridge B4) with the 23S rRNA of the 50S subunit in the ribosome.</text>
</comment>
<comment type="subunit">
    <text evidence="1">Part of the 30S ribosomal subunit. Forms a bridge to the 50S subunit in the 70S ribosome, contacting the 23S rRNA.</text>
</comment>
<comment type="similarity">
    <text evidence="1">Belongs to the universal ribosomal protein uS15 family.</text>
</comment>